<keyword id="KW-1003">Cell membrane</keyword>
<keyword id="KW-0472">Membrane</keyword>
<keyword id="KW-0520">NAD</keyword>
<keyword id="KW-0874">Quinone</keyword>
<keyword id="KW-1185">Reference proteome</keyword>
<keyword id="KW-1278">Translocase</keyword>
<keyword id="KW-0812">Transmembrane</keyword>
<keyword id="KW-1133">Transmembrane helix</keyword>
<keyword id="KW-0813">Transport</keyword>
<dbReference type="EC" id="7.1.1.-" evidence="1"/>
<dbReference type="EMBL" id="AE016879">
    <property type="protein sequence ID" value="AAP29186.1"/>
    <property type="molecule type" value="Genomic_DNA"/>
</dbReference>
<dbReference type="EMBL" id="AE017334">
    <property type="protein sequence ID" value="AAT34686.1"/>
    <property type="molecule type" value="Genomic_DNA"/>
</dbReference>
<dbReference type="EMBL" id="AE017225">
    <property type="protein sequence ID" value="AAT57439.1"/>
    <property type="molecule type" value="Genomic_DNA"/>
</dbReference>
<dbReference type="RefSeq" id="NP_847700.1">
    <property type="nucleotide sequence ID" value="NC_003997.3"/>
</dbReference>
<dbReference type="RefSeq" id="WP_000179275.1">
    <property type="nucleotide sequence ID" value="NZ_WXXJ01000038.1"/>
</dbReference>
<dbReference type="RefSeq" id="YP_031389.1">
    <property type="nucleotide sequence ID" value="NC_005945.1"/>
</dbReference>
<dbReference type="SMR" id="Q81K00"/>
<dbReference type="STRING" id="261594.GBAA_5542"/>
<dbReference type="DNASU" id="1085220"/>
<dbReference type="GeneID" id="75088486"/>
<dbReference type="KEGG" id="ban:BA_5542"/>
<dbReference type="KEGG" id="banh:HYU01_27065"/>
<dbReference type="KEGG" id="bar:GBAA_5542"/>
<dbReference type="KEGG" id="bat:BAS5150"/>
<dbReference type="PATRIC" id="fig|198094.11.peg.5502"/>
<dbReference type="eggNOG" id="COG0838">
    <property type="taxonomic scope" value="Bacteria"/>
</dbReference>
<dbReference type="HOGENOM" id="CLU_119549_1_1_9"/>
<dbReference type="OMA" id="GPRRYNR"/>
<dbReference type="OrthoDB" id="9791970at2"/>
<dbReference type="Proteomes" id="UP000000427">
    <property type="component" value="Chromosome"/>
</dbReference>
<dbReference type="Proteomes" id="UP000000594">
    <property type="component" value="Chromosome"/>
</dbReference>
<dbReference type="GO" id="GO:0030964">
    <property type="term" value="C:NADH dehydrogenase complex"/>
    <property type="evidence" value="ECO:0007669"/>
    <property type="project" value="TreeGrafter"/>
</dbReference>
<dbReference type="GO" id="GO:0005886">
    <property type="term" value="C:plasma membrane"/>
    <property type="evidence" value="ECO:0007669"/>
    <property type="project" value="UniProtKB-SubCell"/>
</dbReference>
<dbReference type="GO" id="GO:0008137">
    <property type="term" value="F:NADH dehydrogenase (ubiquinone) activity"/>
    <property type="evidence" value="ECO:0007669"/>
    <property type="project" value="InterPro"/>
</dbReference>
<dbReference type="GO" id="GO:0050136">
    <property type="term" value="F:NADH:ubiquinone reductase (non-electrogenic) activity"/>
    <property type="evidence" value="ECO:0007669"/>
    <property type="project" value="UniProtKB-UniRule"/>
</dbReference>
<dbReference type="GO" id="GO:0048038">
    <property type="term" value="F:quinone binding"/>
    <property type="evidence" value="ECO:0007669"/>
    <property type="project" value="UniProtKB-KW"/>
</dbReference>
<dbReference type="FunFam" id="1.20.58.1610:FF:000005">
    <property type="entry name" value="NADH-quinone oxidoreductase subunit A"/>
    <property type="match status" value="1"/>
</dbReference>
<dbReference type="Gene3D" id="1.20.58.1610">
    <property type="entry name" value="NADH:ubiquinone/plastoquinone oxidoreductase, chain 3"/>
    <property type="match status" value="1"/>
</dbReference>
<dbReference type="HAMAP" id="MF_01394">
    <property type="entry name" value="NDH1_NuoA"/>
    <property type="match status" value="1"/>
</dbReference>
<dbReference type="InterPro" id="IPR023043">
    <property type="entry name" value="NAD(P)H_OxRDtase_bac/plastid"/>
</dbReference>
<dbReference type="InterPro" id="IPR000440">
    <property type="entry name" value="NADH_UbQ/plastoQ_OxRdtase_su3"/>
</dbReference>
<dbReference type="InterPro" id="IPR038430">
    <property type="entry name" value="NDAH_ubi_oxred_su3_sf"/>
</dbReference>
<dbReference type="NCBIfam" id="NF005839">
    <property type="entry name" value="PRK07756.1"/>
    <property type="match status" value="1"/>
</dbReference>
<dbReference type="PANTHER" id="PTHR11058">
    <property type="entry name" value="NADH-UBIQUINONE OXIDOREDUCTASE CHAIN 3"/>
    <property type="match status" value="1"/>
</dbReference>
<dbReference type="PANTHER" id="PTHR11058:SF9">
    <property type="entry name" value="NADH-UBIQUINONE OXIDOREDUCTASE CHAIN 3"/>
    <property type="match status" value="1"/>
</dbReference>
<dbReference type="Pfam" id="PF00507">
    <property type="entry name" value="Oxidored_q4"/>
    <property type="match status" value="1"/>
</dbReference>
<evidence type="ECO:0000255" key="1">
    <source>
        <dbReference type="HAMAP-Rule" id="MF_01394"/>
    </source>
</evidence>
<proteinExistence type="inferred from homology"/>
<comment type="function">
    <text evidence="1">NDH-1 shuttles electrons from NADH, via FMN and iron-sulfur (Fe-S) centers, to quinones in the respiratory chain. The immediate electron acceptor for the enzyme in this species is believed to be a menaquinone. Couples the redox reaction to proton translocation (for every two electrons transferred, four hydrogen ions are translocated across the cytoplasmic membrane), and thus conserves the redox energy in a proton gradient.</text>
</comment>
<comment type="catalytic activity">
    <reaction evidence="1">
        <text>a quinone + NADH + 5 H(+)(in) = a quinol + NAD(+) + 4 H(+)(out)</text>
        <dbReference type="Rhea" id="RHEA:57888"/>
        <dbReference type="ChEBI" id="CHEBI:15378"/>
        <dbReference type="ChEBI" id="CHEBI:24646"/>
        <dbReference type="ChEBI" id="CHEBI:57540"/>
        <dbReference type="ChEBI" id="CHEBI:57945"/>
        <dbReference type="ChEBI" id="CHEBI:132124"/>
    </reaction>
</comment>
<comment type="subunit">
    <text evidence="1">NDH-1 is composed of 14 different subunits. Subunits NuoA, H, J, K, L, M, N constitute the membrane sector of the complex.</text>
</comment>
<comment type="subcellular location">
    <subcellularLocation>
        <location evidence="1">Cell membrane</location>
        <topology evidence="1">Multi-pass membrane protein</topology>
    </subcellularLocation>
</comment>
<comment type="similarity">
    <text evidence="1">Belongs to the complex I subunit 3 family.</text>
</comment>
<sequence>MASVYENSYMIVLIFLLLGILLPVVALTLGRMLRPNKPSAAKATTYESGIEPFHDANIRFHARYYIFALLFVIFDVETLFLYPWAVAYDNLGLFALIEMLIFVVMLLVGLAYAWKKKVLQWL</sequence>
<accession>Q81K00</accession>
<accession>Q6HQJ9</accession>
<accession>Q6KJX4</accession>
<name>NUOA_BACAN</name>
<protein>
    <recommendedName>
        <fullName evidence="1">NADH-quinone oxidoreductase subunit A</fullName>
        <ecNumber evidence="1">7.1.1.-</ecNumber>
    </recommendedName>
    <alternativeName>
        <fullName evidence="1">NADH dehydrogenase I subunit A</fullName>
    </alternativeName>
    <alternativeName>
        <fullName evidence="1">NDH-1 subunit A</fullName>
    </alternativeName>
    <alternativeName>
        <fullName evidence="1">NUO1</fullName>
    </alternativeName>
</protein>
<reference key="1">
    <citation type="journal article" date="2003" name="Nature">
        <title>The genome sequence of Bacillus anthracis Ames and comparison to closely related bacteria.</title>
        <authorList>
            <person name="Read T.D."/>
            <person name="Peterson S.N."/>
            <person name="Tourasse N.J."/>
            <person name="Baillie L.W."/>
            <person name="Paulsen I.T."/>
            <person name="Nelson K.E."/>
            <person name="Tettelin H."/>
            <person name="Fouts D.E."/>
            <person name="Eisen J.A."/>
            <person name="Gill S.R."/>
            <person name="Holtzapple E.K."/>
            <person name="Okstad O.A."/>
            <person name="Helgason E."/>
            <person name="Rilstone J."/>
            <person name="Wu M."/>
            <person name="Kolonay J.F."/>
            <person name="Beanan M.J."/>
            <person name="Dodson R.J."/>
            <person name="Brinkac L.M."/>
            <person name="Gwinn M.L."/>
            <person name="DeBoy R.T."/>
            <person name="Madpu R."/>
            <person name="Daugherty S.C."/>
            <person name="Durkin A.S."/>
            <person name="Haft D.H."/>
            <person name="Nelson W.C."/>
            <person name="Peterson J.D."/>
            <person name="Pop M."/>
            <person name="Khouri H.M."/>
            <person name="Radune D."/>
            <person name="Benton J.L."/>
            <person name="Mahamoud Y."/>
            <person name="Jiang L."/>
            <person name="Hance I.R."/>
            <person name="Weidman J.F."/>
            <person name="Berry K.J."/>
            <person name="Plaut R.D."/>
            <person name="Wolf A.M."/>
            <person name="Watkins K.L."/>
            <person name="Nierman W.C."/>
            <person name="Hazen A."/>
            <person name="Cline R.T."/>
            <person name="Redmond C."/>
            <person name="Thwaite J.E."/>
            <person name="White O."/>
            <person name="Salzberg S.L."/>
            <person name="Thomason B."/>
            <person name="Friedlander A.M."/>
            <person name="Koehler T.M."/>
            <person name="Hanna P.C."/>
            <person name="Kolstoe A.-B."/>
            <person name="Fraser C.M."/>
        </authorList>
    </citation>
    <scope>NUCLEOTIDE SEQUENCE [LARGE SCALE GENOMIC DNA]</scope>
    <source>
        <strain>Ames / isolate Porton</strain>
    </source>
</reference>
<reference key="2">
    <citation type="submission" date="2004-01" db="EMBL/GenBank/DDBJ databases">
        <title>Complete genome sequence of Bacillus anthracis Sterne.</title>
        <authorList>
            <person name="Brettin T.S."/>
            <person name="Bruce D."/>
            <person name="Challacombe J.F."/>
            <person name="Gilna P."/>
            <person name="Han C."/>
            <person name="Hill K."/>
            <person name="Hitchcock P."/>
            <person name="Jackson P."/>
            <person name="Keim P."/>
            <person name="Longmire J."/>
            <person name="Lucas S."/>
            <person name="Okinaka R."/>
            <person name="Richardson P."/>
            <person name="Rubin E."/>
            <person name="Tice H."/>
        </authorList>
    </citation>
    <scope>NUCLEOTIDE SEQUENCE [LARGE SCALE GENOMIC DNA]</scope>
    <source>
        <strain>Sterne</strain>
    </source>
</reference>
<reference key="3">
    <citation type="journal article" date="2009" name="J. Bacteriol.">
        <title>The complete genome sequence of Bacillus anthracis Ames 'Ancestor'.</title>
        <authorList>
            <person name="Ravel J."/>
            <person name="Jiang L."/>
            <person name="Stanley S.T."/>
            <person name="Wilson M.R."/>
            <person name="Decker R.S."/>
            <person name="Read T.D."/>
            <person name="Worsham P."/>
            <person name="Keim P.S."/>
            <person name="Salzberg S.L."/>
            <person name="Fraser-Liggett C.M."/>
            <person name="Rasko D.A."/>
        </authorList>
    </citation>
    <scope>NUCLEOTIDE SEQUENCE [LARGE SCALE GENOMIC DNA]</scope>
    <source>
        <strain>Ames ancestor</strain>
    </source>
</reference>
<organism>
    <name type="scientific">Bacillus anthracis</name>
    <dbReference type="NCBI Taxonomy" id="1392"/>
    <lineage>
        <taxon>Bacteria</taxon>
        <taxon>Bacillati</taxon>
        <taxon>Bacillota</taxon>
        <taxon>Bacilli</taxon>
        <taxon>Bacillales</taxon>
        <taxon>Bacillaceae</taxon>
        <taxon>Bacillus</taxon>
        <taxon>Bacillus cereus group</taxon>
    </lineage>
</organism>
<gene>
    <name evidence="1" type="primary">nuoA</name>
    <name type="ordered locus">BA_5542</name>
    <name type="ordered locus">GBAA_5542</name>
    <name type="ordered locus">BAS5150</name>
</gene>
<feature type="chain" id="PRO_0000362619" description="NADH-quinone oxidoreductase subunit A">
    <location>
        <begin position="1"/>
        <end position="122"/>
    </location>
</feature>
<feature type="transmembrane region" description="Helical" evidence="1">
    <location>
        <begin position="10"/>
        <end position="30"/>
    </location>
</feature>
<feature type="transmembrane region" description="Helical" evidence="1">
    <location>
        <begin position="66"/>
        <end position="86"/>
    </location>
</feature>
<feature type="transmembrane region" description="Helical" evidence="1">
    <location>
        <begin position="91"/>
        <end position="111"/>
    </location>
</feature>